<organism>
    <name type="scientific">Leptospira interrogans serogroup Icterohaemorrhagiae serovar copenhageni (strain Fiocruz L1-130)</name>
    <dbReference type="NCBI Taxonomy" id="267671"/>
    <lineage>
        <taxon>Bacteria</taxon>
        <taxon>Pseudomonadati</taxon>
        <taxon>Spirochaetota</taxon>
        <taxon>Spirochaetia</taxon>
        <taxon>Leptospirales</taxon>
        <taxon>Leptospiraceae</taxon>
        <taxon>Leptospira</taxon>
    </lineage>
</organism>
<feature type="chain" id="PRO_0000163669" description="1-deoxy-D-xylulose 5-phosphate reductoisomerase">
    <location>
        <begin position="1"/>
        <end position="389"/>
    </location>
</feature>
<feature type="binding site" evidence="1">
    <location>
        <position position="11"/>
    </location>
    <ligand>
        <name>NADPH</name>
        <dbReference type="ChEBI" id="CHEBI:57783"/>
    </ligand>
</feature>
<feature type="binding site" evidence="1">
    <location>
        <position position="12"/>
    </location>
    <ligand>
        <name>NADPH</name>
        <dbReference type="ChEBI" id="CHEBI:57783"/>
    </ligand>
</feature>
<feature type="binding site" evidence="1">
    <location>
        <position position="13"/>
    </location>
    <ligand>
        <name>NADPH</name>
        <dbReference type="ChEBI" id="CHEBI:57783"/>
    </ligand>
</feature>
<feature type="binding site" evidence="1">
    <location>
        <position position="14"/>
    </location>
    <ligand>
        <name>NADPH</name>
        <dbReference type="ChEBI" id="CHEBI:57783"/>
    </ligand>
</feature>
<feature type="binding site" evidence="1">
    <location>
        <position position="39"/>
    </location>
    <ligand>
        <name>NADPH</name>
        <dbReference type="ChEBI" id="CHEBI:57783"/>
    </ligand>
</feature>
<feature type="binding site" evidence="1">
    <location>
        <position position="122"/>
    </location>
    <ligand>
        <name>NADPH</name>
        <dbReference type="ChEBI" id="CHEBI:57783"/>
    </ligand>
</feature>
<feature type="binding site" evidence="1">
    <location>
        <position position="123"/>
    </location>
    <ligand>
        <name>1-deoxy-D-xylulose 5-phosphate</name>
        <dbReference type="ChEBI" id="CHEBI:57792"/>
    </ligand>
</feature>
<feature type="binding site" evidence="1">
    <location>
        <position position="124"/>
    </location>
    <ligand>
        <name>NADPH</name>
        <dbReference type="ChEBI" id="CHEBI:57783"/>
    </ligand>
</feature>
<feature type="binding site" evidence="1">
    <location>
        <position position="148"/>
    </location>
    <ligand>
        <name>Mn(2+)</name>
        <dbReference type="ChEBI" id="CHEBI:29035"/>
    </ligand>
</feature>
<feature type="binding site" evidence="1">
    <location>
        <position position="149"/>
    </location>
    <ligand>
        <name>1-deoxy-D-xylulose 5-phosphate</name>
        <dbReference type="ChEBI" id="CHEBI:57792"/>
    </ligand>
</feature>
<feature type="binding site" evidence="1">
    <location>
        <position position="150"/>
    </location>
    <ligand>
        <name>1-deoxy-D-xylulose 5-phosphate</name>
        <dbReference type="ChEBI" id="CHEBI:57792"/>
    </ligand>
</feature>
<feature type="binding site" evidence="1">
    <location>
        <position position="150"/>
    </location>
    <ligand>
        <name>Mn(2+)</name>
        <dbReference type="ChEBI" id="CHEBI:29035"/>
    </ligand>
</feature>
<feature type="binding site" evidence="1">
    <location>
        <position position="174"/>
    </location>
    <ligand>
        <name>1-deoxy-D-xylulose 5-phosphate</name>
        <dbReference type="ChEBI" id="CHEBI:57792"/>
    </ligand>
</feature>
<feature type="binding site" evidence="1">
    <location>
        <position position="197"/>
    </location>
    <ligand>
        <name>1-deoxy-D-xylulose 5-phosphate</name>
        <dbReference type="ChEBI" id="CHEBI:57792"/>
    </ligand>
</feature>
<feature type="binding site" evidence="1">
    <location>
        <position position="203"/>
    </location>
    <ligand>
        <name>NADPH</name>
        <dbReference type="ChEBI" id="CHEBI:57783"/>
    </ligand>
</feature>
<feature type="binding site" evidence="1">
    <location>
        <position position="210"/>
    </location>
    <ligand>
        <name>1-deoxy-D-xylulose 5-phosphate</name>
        <dbReference type="ChEBI" id="CHEBI:57792"/>
    </ligand>
</feature>
<feature type="binding site" evidence="1">
    <location>
        <position position="215"/>
    </location>
    <ligand>
        <name>1-deoxy-D-xylulose 5-phosphate</name>
        <dbReference type="ChEBI" id="CHEBI:57792"/>
    </ligand>
</feature>
<feature type="binding site" evidence="1">
    <location>
        <position position="216"/>
    </location>
    <ligand>
        <name>1-deoxy-D-xylulose 5-phosphate</name>
        <dbReference type="ChEBI" id="CHEBI:57792"/>
    </ligand>
</feature>
<feature type="binding site" evidence="1">
    <location>
        <position position="219"/>
    </location>
    <ligand>
        <name>1-deoxy-D-xylulose 5-phosphate</name>
        <dbReference type="ChEBI" id="CHEBI:57792"/>
    </ligand>
</feature>
<feature type="binding site" evidence="1">
    <location>
        <position position="219"/>
    </location>
    <ligand>
        <name>Mn(2+)</name>
        <dbReference type="ChEBI" id="CHEBI:29035"/>
    </ligand>
</feature>
<dbReference type="EC" id="1.1.1.267" evidence="1"/>
<dbReference type="EMBL" id="AE016823">
    <property type="protein sequence ID" value="AAS69470.1"/>
    <property type="molecule type" value="Genomic_DNA"/>
</dbReference>
<dbReference type="RefSeq" id="WP_000213814.1">
    <property type="nucleotide sequence ID" value="NC_005823.1"/>
</dbReference>
<dbReference type="SMR" id="Q72U08"/>
<dbReference type="GeneID" id="61144188"/>
<dbReference type="KEGG" id="lic:LIC_10856"/>
<dbReference type="HOGENOM" id="CLU_035714_4_0_12"/>
<dbReference type="UniPathway" id="UPA00056">
    <property type="reaction ID" value="UER00092"/>
</dbReference>
<dbReference type="Proteomes" id="UP000007037">
    <property type="component" value="Chromosome I"/>
</dbReference>
<dbReference type="GO" id="GO:0030604">
    <property type="term" value="F:1-deoxy-D-xylulose-5-phosphate reductoisomerase activity"/>
    <property type="evidence" value="ECO:0007669"/>
    <property type="project" value="UniProtKB-UniRule"/>
</dbReference>
<dbReference type="GO" id="GO:0030145">
    <property type="term" value="F:manganese ion binding"/>
    <property type="evidence" value="ECO:0007669"/>
    <property type="project" value="TreeGrafter"/>
</dbReference>
<dbReference type="GO" id="GO:0070402">
    <property type="term" value="F:NADPH binding"/>
    <property type="evidence" value="ECO:0007669"/>
    <property type="project" value="InterPro"/>
</dbReference>
<dbReference type="GO" id="GO:0051484">
    <property type="term" value="P:isopentenyl diphosphate biosynthetic process, methylerythritol 4-phosphate pathway involved in terpenoid biosynthetic process"/>
    <property type="evidence" value="ECO:0007669"/>
    <property type="project" value="TreeGrafter"/>
</dbReference>
<dbReference type="FunFam" id="3.40.50.720:FF:000045">
    <property type="entry name" value="1-deoxy-D-xylulose 5-phosphate reductoisomerase"/>
    <property type="match status" value="1"/>
</dbReference>
<dbReference type="Gene3D" id="1.10.1740.10">
    <property type="match status" value="1"/>
</dbReference>
<dbReference type="Gene3D" id="3.40.50.720">
    <property type="entry name" value="NAD(P)-binding Rossmann-like Domain"/>
    <property type="match status" value="1"/>
</dbReference>
<dbReference type="HAMAP" id="MF_00183">
    <property type="entry name" value="DXP_reductoisom"/>
    <property type="match status" value="1"/>
</dbReference>
<dbReference type="InterPro" id="IPR003821">
    <property type="entry name" value="DXP_reductoisomerase"/>
</dbReference>
<dbReference type="InterPro" id="IPR013644">
    <property type="entry name" value="DXP_reductoisomerase_C"/>
</dbReference>
<dbReference type="InterPro" id="IPR013512">
    <property type="entry name" value="DXP_reductoisomerase_N"/>
</dbReference>
<dbReference type="InterPro" id="IPR026877">
    <property type="entry name" value="DXPR_C"/>
</dbReference>
<dbReference type="InterPro" id="IPR036169">
    <property type="entry name" value="DXPR_C_sf"/>
</dbReference>
<dbReference type="InterPro" id="IPR036291">
    <property type="entry name" value="NAD(P)-bd_dom_sf"/>
</dbReference>
<dbReference type="NCBIfam" id="TIGR00243">
    <property type="entry name" value="Dxr"/>
    <property type="match status" value="1"/>
</dbReference>
<dbReference type="PANTHER" id="PTHR30525">
    <property type="entry name" value="1-DEOXY-D-XYLULOSE 5-PHOSPHATE REDUCTOISOMERASE"/>
    <property type="match status" value="1"/>
</dbReference>
<dbReference type="PANTHER" id="PTHR30525:SF0">
    <property type="entry name" value="1-DEOXY-D-XYLULOSE 5-PHOSPHATE REDUCTOISOMERASE, CHLOROPLASTIC"/>
    <property type="match status" value="1"/>
</dbReference>
<dbReference type="Pfam" id="PF08436">
    <property type="entry name" value="DXP_redisom_C"/>
    <property type="match status" value="1"/>
</dbReference>
<dbReference type="Pfam" id="PF02670">
    <property type="entry name" value="DXP_reductoisom"/>
    <property type="match status" value="1"/>
</dbReference>
<dbReference type="Pfam" id="PF13288">
    <property type="entry name" value="DXPR_C"/>
    <property type="match status" value="1"/>
</dbReference>
<dbReference type="PIRSF" id="PIRSF006205">
    <property type="entry name" value="Dxp_reductismrs"/>
    <property type="match status" value="1"/>
</dbReference>
<dbReference type="SUPFAM" id="SSF69055">
    <property type="entry name" value="1-deoxy-D-xylulose-5-phosphate reductoisomerase, C-terminal domain"/>
    <property type="match status" value="1"/>
</dbReference>
<dbReference type="SUPFAM" id="SSF55347">
    <property type="entry name" value="Glyceraldehyde-3-phosphate dehydrogenase-like, C-terminal domain"/>
    <property type="match status" value="1"/>
</dbReference>
<dbReference type="SUPFAM" id="SSF51735">
    <property type="entry name" value="NAD(P)-binding Rossmann-fold domains"/>
    <property type="match status" value="1"/>
</dbReference>
<evidence type="ECO:0000255" key="1">
    <source>
        <dbReference type="HAMAP-Rule" id="MF_00183"/>
    </source>
</evidence>
<name>DXR_LEPIC</name>
<comment type="function">
    <text evidence="1">Catalyzes the NADPH-dependent rearrangement and reduction of 1-deoxy-D-xylulose-5-phosphate (DXP) to 2-C-methyl-D-erythritol 4-phosphate (MEP).</text>
</comment>
<comment type="catalytic activity">
    <reaction evidence="1">
        <text>2-C-methyl-D-erythritol 4-phosphate + NADP(+) = 1-deoxy-D-xylulose 5-phosphate + NADPH + H(+)</text>
        <dbReference type="Rhea" id="RHEA:13717"/>
        <dbReference type="ChEBI" id="CHEBI:15378"/>
        <dbReference type="ChEBI" id="CHEBI:57783"/>
        <dbReference type="ChEBI" id="CHEBI:57792"/>
        <dbReference type="ChEBI" id="CHEBI:58262"/>
        <dbReference type="ChEBI" id="CHEBI:58349"/>
        <dbReference type="EC" id="1.1.1.267"/>
    </reaction>
    <physiologicalReaction direction="right-to-left" evidence="1">
        <dbReference type="Rhea" id="RHEA:13719"/>
    </physiologicalReaction>
</comment>
<comment type="cofactor">
    <cofactor evidence="1">
        <name>Mg(2+)</name>
        <dbReference type="ChEBI" id="CHEBI:18420"/>
    </cofactor>
    <cofactor evidence="1">
        <name>Mn(2+)</name>
        <dbReference type="ChEBI" id="CHEBI:29035"/>
    </cofactor>
</comment>
<comment type="pathway">
    <text evidence="1">Isoprenoid biosynthesis; isopentenyl diphosphate biosynthesis via DXP pathway; isopentenyl diphosphate from 1-deoxy-D-xylulose 5-phosphate: step 1/6.</text>
</comment>
<comment type="similarity">
    <text evidence="1">Belongs to the DXR family.</text>
</comment>
<protein>
    <recommendedName>
        <fullName evidence="1">1-deoxy-D-xylulose 5-phosphate reductoisomerase</fullName>
        <shortName evidence="1">DXP reductoisomerase</shortName>
        <ecNumber evidence="1">1.1.1.267</ecNumber>
    </recommendedName>
    <alternativeName>
        <fullName evidence="1">1-deoxyxylulose-5-phosphate reductoisomerase</fullName>
    </alternativeName>
    <alternativeName>
        <fullName evidence="1">2-C-methyl-D-erythritol 4-phosphate synthase</fullName>
    </alternativeName>
</protein>
<proteinExistence type="inferred from homology"/>
<keyword id="KW-0414">Isoprene biosynthesis</keyword>
<keyword id="KW-0464">Manganese</keyword>
<keyword id="KW-0479">Metal-binding</keyword>
<keyword id="KW-0521">NADP</keyword>
<keyword id="KW-0560">Oxidoreductase</keyword>
<sequence length="389" mass="42805">MTTSVCLLGASGSVGESTLKVLRAYPEKFRLHSFSVHSNLEKAKEIQKEFSPDFICVSSDFADVGVLGNKLGRTQILYGESSLCELVREPEVEIVITAIVGSVGLRPTIAAITAGKRLGIANKETLVTSGPLIQSLIAKHNTKVVPVDSEHNALFQLLESLNPNSVEKIILTASGGAFRDLPVEQLSSVTKEQALHHPTWNMGPKITIDSNGMINKGLEVIEAHFLFNVPYDKIGVVIHPQSIAHGIVELKDGASFLYASYPDMIFPIAHSLFHPEPVPKVLRSYPAKDWGKLEFREPDFKRYPGLGLAFEAGKVGGTAPCIFNAANEAAVELFLKDEIRFIEIPDYIRKTLDEIKIEFPLSLEEYEEADRIARETVRNLKARKVVSAC</sequence>
<accession>Q72U08</accession>
<gene>
    <name evidence="1" type="primary">dxr</name>
    <name type="ordered locus">LIC_10856</name>
</gene>
<reference key="1">
    <citation type="journal article" date="2004" name="J. Bacteriol.">
        <title>Comparative genomics of two Leptospira interrogans serovars reveals novel insights into physiology and pathogenesis.</title>
        <authorList>
            <person name="Nascimento A.L.T.O."/>
            <person name="Ko A.I."/>
            <person name="Martins E.A.L."/>
            <person name="Monteiro-Vitorello C.B."/>
            <person name="Ho P.L."/>
            <person name="Haake D.A."/>
            <person name="Verjovski-Almeida S."/>
            <person name="Hartskeerl R.A."/>
            <person name="Marques M.V."/>
            <person name="Oliveira M.C."/>
            <person name="Menck C.F.M."/>
            <person name="Leite L.C.C."/>
            <person name="Carrer H."/>
            <person name="Coutinho L.L."/>
            <person name="Degrave W.M."/>
            <person name="Dellagostin O.A."/>
            <person name="El-Dorry H."/>
            <person name="Ferro E.S."/>
            <person name="Ferro M.I.T."/>
            <person name="Furlan L.R."/>
            <person name="Gamberini M."/>
            <person name="Giglioti E.A."/>
            <person name="Goes-Neto A."/>
            <person name="Goldman G.H."/>
            <person name="Goldman M.H.S."/>
            <person name="Harakava R."/>
            <person name="Jeronimo S.M.B."/>
            <person name="Junqueira-de-Azevedo I.L.M."/>
            <person name="Kimura E.T."/>
            <person name="Kuramae E.E."/>
            <person name="Lemos E.G.M."/>
            <person name="Lemos M.V.F."/>
            <person name="Marino C.L."/>
            <person name="Nunes L.R."/>
            <person name="de Oliveira R.C."/>
            <person name="Pereira G.G."/>
            <person name="Reis M.S."/>
            <person name="Schriefer A."/>
            <person name="Siqueira W.J."/>
            <person name="Sommer P."/>
            <person name="Tsai S.M."/>
            <person name="Simpson A.J.G."/>
            <person name="Ferro J.A."/>
            <person name="Camargo L.E.A."/>
            <person name="Kitajima J.P."/>
            <person name="Setubal J.C."/>
            <person name="Van Sluys M.A."/>
        </authorList>
    </citation>
    <scope>NUCLEOTIDE SEQUENCE [LARGE SCALE GENOMIC DNA]</scope>
    <source>
        <strain>Fiocruz L1-130</strain>
    </source>
</reference>